<accession>Q63T71</accession>
<gene>
    <name evidence="1" type="primary">ispF</name>
    <name type="synonym">mecS</name>
    <name type="ordered locus">BPSL2098</name>
</gene>
<feature type="chain" id="PRO_0000189450" description="2-C-methyl-D-erythritol 2,4-cyclodiphosphate synthase">
    <location>
        <begin position="1"/>
        <end position="162"/>
    </location>
</feature>
<feature type="binding site" evidence="1">
    <location>
        <begin position="10"/>
        <end position="12"/>
    </location>
    <ligand>
        <name>4-CDP-2-C-methyl-D-erythritol 2-phosphate</name>
        <dbReference type="ChEBI" id="CHEBI:57919"/>
    </ligand>
</feature>
<feature type="binding site" evidence="1">
    <location>
        <position position="10"/>
    </location>
    <ligand>
        <name>a divalent metal cation</name>
        <dbReference type="ChEBI" id="CHEBI:60240"/>
    </ligand>
</feature>
<feature type="binding site" evidence="1">
    <location>
        <position position="12"/>
    </location>
    <ligand>
        <name>a divalent metal cation</name>
        <dbReference type="ChEBI" id="CHEBI:60240"/>
    </ligand>
</feature>
<feature type="binding site" evidence="1">
    <location>
        <begin position="36"/>
        <end position="37"/>
    </location>
    <ligand>
        <name>4-CDP-2-C-methyl-D-erythritol 2-phosphate</name>
        <dbReference type="ChEBI" id="CHEBI:57919"/>
    </ligand>
</feature>
<feature type="binding site" evidence="1">
    <location>
        <position position="44"/>
    </location>
    <ligand>
        <name>a divalent metal cation</name>
        <dbReference type="ChEBI" id="CHEBI:60240"/>
    </ligand>
</feature>
<feature type="binding site" evidence="1">
    <location>
        <begin position="58"/>
        <end position="60"/>
    </location>
    <ligand>
        <name>4-CDP-2-C-methyl-D-erythritol 2-phosphate</name>
        <dbReference type="ChEBI" id="CHEBI:57919"/>
    </ligand>
</feature>
<feature type="binding site" evidence="1">
    <location>
        <begin position="63"/>
        <end position="67"/>
    </location>
    <ligand>
        <name>4-CDP-2-C-methyl-D-erythritol 2-phosphate</name>
        <dbReference type="ChEBI" id="CHEBI:57919"/>
    </ligand>
</feature>
<feature type="binding site">
    <location>
        <position position="67"/>
    </location>
    <ligand>
        <name>4-CDP-2-C-methyl-D-erythritol 2-phosphate</name>
        <dbReference type="ChEBI" id="CHEBI:57919"/>
    </ligand>
</feature>
<feature type="binding site">
    <location>
        <begin position="102"/>
        <end position="108"/>
    </location>
    <ligand>
        <name>4-CDP-2-C-methyl-D-erythritol 2-phosphate</name>
        <dbReference type="ChEBI" id="CHEBI:57919"/>
    </ligand>
</feature>
<feature type="binding site">
    <location>
        <begin position="133"/>
        <end position="137"/>
    </location>
    <ligand>
        <name>4-CDP-2-C-methyl-D-erythritol 2-phosphate</name>
        <dbReference type="ChEBI" id="CHEBI:57919"/>
    </ligand>
</feature>
<feature type="binding site" evidence="1">
    <location>
        <position position="144"/>
    </location>
    <ligand>
        <name>4-CDP-2-C-methyl-D-erythritol 2-phosphate</name>
        <dbReference type="ChEBI" id="CHEBI:57919"/>
    </ligand>
</feature>
<feature type="site" description="Transition state stabilizer" evidence="1">
    <location>
        <position position="36"/>
    </location>
</feature>
<feature type="site" description="Transition state stabilizer" evidence="1">
    <location>
        <position position="135"/>
    </location>
</feature>
<feature type="strand" evidence="5">
    <location>
        <begin position="2"/>
        <end position="16"/>
    </location>
</feature>
<feature type="strand" evidence="5">
    <location>
        <begin position="20"/>
        <end position="22"/>
    </location>
</feature>
<feature type="strand" evidence="5">
    <location>
        <begin position="25"/>
        <end position="27"/>
    </location>
</feature>
<feature type="strand" evidence="5">
    <location>
        <begin position="30"/>
        <end position="33"/>
    </location>
</feature>
<feature type="strand" evidence="4">
    <location>
        <begin position="35"/>
        <end position="38"/>
    </location>
</feature>
<feature type="helix" evidence="5">
    <location>
        <begin position="41"/>
        <end position="53"/>
    </location>
</feature>
<feature type="helix" evidence="5">
    <location>
        <begin position="59"/>
        <end position="62"/>
    </location>
</feature>
<feature type="turn" evidence="5">
    <location>
        <begin position="69"/>
        <end position="72"/>
    </location>
</feature>
<feature type="helix" evidence="5">
    <location>
        <begin position="75"/>
        <end position="88"/>
    </location>
</feature>
<feature type="strand" evidence="5">
    <location>
        <begin position="91"/>
        <end position="101"/>
    </location>
</feature>
<feature type="strand" evidence="5">
    <location>
        <begin position="103"/>
        <end position="105"/>
    </location>
</feature>
<feature type="helix" evidence="5">
    <location>
        <begin position="108"/>
        <end position="122"/>
    </location>
</feature>
<feature type="helix" evidence="5">
    <location>
        <begin position="126"/>
        <end position="128"/>
    </location>
</feature>
<feature type="strand" evidence="5">
    <location>
        <begin position="132"/>
        <end position="134"/>
    </location>
</feature>
<feature type="helix" evidence="5">
    <location>
        <begin position="140"/>
        <end position="143"/>
    </location>
</feature>
<feature type="strand" evidence="5">
    <location>
        <begin position="146"/>
        <end position="158"/>
    </location>
</feature>
<dbReference type="EC" id="4.6.1.12" evidence="1"/>
<dbReference type="EMBL" id="BX571965">
    <property type="protein sequence ID" value="CAH36101.1"/>
    <property type="molecule type" value="Genomic_DNA"/>
</dbReference>
<dbReference type="RefSeq" id="WP_004191369.1">
    <property type="nucleotide sequence ID" value="NZ_CP009538.1"/>
</dbReference>
<dbReference type="RefSeq" id="YP_108695.1">
    <property type="nucleotide sequence ID" value="NC_006350.1"/>
</dbReference>
<dbReference type="PDB" id="3IEW">
    <property type="method" value="X-ray"/>
    <property type="resolution" value="2.10 A"/>
    <property type="chains" value="A/B/C=1-162"/>
</dbReference>
<dbReference type="PDB" id="3IKE">
    <property type="method" value="X-ray"/>
    <property type="resolution" value="2.30 A"/>
    <property type="chains" value="A/B/C=1-162"/>
</dbReference>
<dbReference type="PDB" id="3IKF">
    <property type="method" value="X-ray"/>
    <property type="resolution" value="2.07 A"/>
    <property type="chains" value="A/B/C=1-162"/>
</dbReference>
<dbReference type="PDB" id="3Q8H">
    <property type="method" value="X-ray"/>
    <property type="resolution" value="1.75 A"/>
    <property type="chains" value="A/B/C=1-162"/>
</dbReference>
<dbReference type="PDBsum" id="3IEW"/>
<dbReference type="PDBsum" id="3IKE"/>
<dbReference type="PDBsum" id="3IKF"/>
<dbReference type="PDBsum" id="3Q8H"/>
<dbReference type="SMR" id="Q63T71"/>
<dbReference type="STRING" id="272560.BPSL2098"/>
<dbReference type="BindingDB" id="Q63T71"/>
<dbReference type="ChEMBL" id="CHEMBL3091270"/>
<dbReference type="GeneID" id="93060627"/>
<dbReference type="KEGG" id="bps:BPSL2098"/>
<dbReference type="PATRIC" id="fig|272560.51.peg.3381"/>
<dbReference type="eggNOG" id="COG0245">
    <property type="taxonomic scope" value="Bacteria"/>
</dbReference>
<dbReference type="UniPathway" id="UPA00056">
    <property type="reaction ID" value="UER00095"/>
</dbReference>
<dbReference type="EvolutionaryTrace" id="Q63T71"/>
<dbReference type="Proteomes" id="UP000000605">
    <property type="component" value="Chromosome 1"/>
</dbReference>
<dbReference type="GO" id="GO:0008685">
    <property type="term" value="F:2-C-methyl-D-erythritol 2,4-cyclodiphosphate synthase activity"/>
    <property type="evidence" value="ECO:0007669"/>
    <property type="project" value="UniProtKB-UniRule"/>
</dbReference>
<dbReference type="GO" id="GO:0046872">
    <property type="term" value="F:metal ion binding"/>
    <property type="evidence" value="ECO:0007669"/>
    <property type="project" value="UniProtKB-KW"/>
</dbReference>
<dbReference type="GO" id="GO:0019288">
    <property type="term" value="P:isopentenyl diphosphate biosynthetic process, methylerythritol 4-phosphate pathway"/>
    <property type="evidence" value="ECO:0007669"/>
    <property type="project" value="UniProtKB-UniRule"/>
</dbReference>
<dbReference type="GO" id="GO:0016114">
    <property type="term" value="P:terpenoid biosynthetic process"/>
    <property type="evidence" value="ECO:0007669"/>
    <property type="project" value="InterPro"/>
</dbReference>
<dbReference type="CDD" id="cd00554">
    <property type="entry name" value="MECDP_synthase"/>
    <property type="match status" value="1"/>
</dbReference>
<dbReference type="FunFam" id="3.30.1330.50:FF:000001">
    <property type="entry name" value="2-C-methyl-D-erythritol 2,4-cyclodiphosphate synthase"/>
    <property type="match status" value="1"/>
</dbReference>
<dbReference type="Gene3D" id="3.30.1330.50">
    <property type="entry name" value="2-C-methyl-D-erythritol 2,4-cyclodiphosphate synthase"/>
    <property type="match status" value="1"/>
</dbReference>
<dbReference type="HAMAP" id="MF_00107">
    <property type="entry name" value="IspF"/>
    <property type="match status" value="1"/>
</dbReference>
<dbReference type="InterPro" id="IPR003526">
    <property type="entry name" value="MECDP_synthase"/>
</dbReference>
<dbReference type="InterPro" id="IPR020555">
    <property type="entry name" value="MECDP_synthase_CS"/>
</dbReference>
<dbReference type="InterPro" id="IPR036571">
    <property type="entry name" value="MECDP_synthase_sf"/>
</dbReference>
<dbReference type="NCBIfam" id="TIGR00151">
    <property type="entry name" value="ispF"/>
    <property type="match status" value="1"/>
</dbReference>
<dbReference type="PANTHER" id="PTHR43181">
    <property type="entry name" value="2-C-METHYL-D-ERYTHRITOL 2,4-CYCLODIPHOSPHATE SYNTHASE, CHLOROPLASTIC"/>
    <property type="match status" value="1"/>
</dbReference>
<dbReference type="PANTHER" id="PTHR43181:SF1">
    <property type="entry name" value="2-C-METHYL-D-ERYTHRITOL 2,4-CYCLODIPHOSPHATE SYNTHASE, CHLOROPLASTIC"/>
    <property type="match status" value="1"/>
</dbReference>
<dbReference type="Pfam" id="PF02542">
    <property type="entry name" value="YgbB"/>
    <property type="match status" value="1"/>
</dbReference>
<dbReference type="SUPFAM" id="SSF69765">
    <property type="entry name" value="IpsF-like"/>
    <property type="match status" value="1"/>
</dbReference>
<dbReference type="PROSITE" id="PS01350">
    <property type="entry name" value="ISPF"/>
    <property type="match status" value="1"/>
</dbReference>
<proteinExistence type="evidence at protein level"/>
<protein>
    <recommendedName>
        <fullName evidence="1">2-C-methyl-D-erythritol 2,4-cyclodiphosphate synthase</fullName>
        <shortName evidence="1">MECDP-synthase</shortName>
        <shortName evidence="1">MECPP-synthase</shortName>
        <shortName evidence="1">MECPS</shortName>
        <ecNumber evidence="1">4.6.1.12</ecNumber>
    </recommendedName>
</protein>
<name>ISPF_BURPS</name>
<comment type="function">
    <text evidence="1">Involved in the biosynthesis of isopentenyl diphosphate (IPP) and dimethylallyl diphosphate (DMAPP), two major building blocks of isoprenoid compounds. Catalyzes the conversion of 4-diphosphocytidyl-2-C-methyl-D-erythritol 2-phosphate (CDP-ME2P) to 2-C-methyl-D-erythritol 2,4-cyclodiphosphate (ME-CPP) with a corresponding release of cytidine 5-monophosphate (CMP).</text>
</comment>
<comment type="catalytic activity">
    <reaction evidence="1">
        <text>4-CDP-2-C-methyl-D-erythritol 2-phosphate = 2-C-methyl-D-erythritol 2,4-cyclic diphosphate + CMP</text>
        <dbReference type="Rhea" id="RHEA:23864"/>
        <dbReference type="ChEBI" id="CHEBI:57919"/>
        <dbReference type="ChEBI" id="CHEBI:58483"/>
        <dbReference type="ChEBI" id="CHEBI:60377"/>
        <dbReference type="EC" id="4.6.1.12"/>
    </reaction>
</comment>
<comment type="cofactor">
    <cofactor evidence="1 2 3">
        <name>a divalent metal cation</name>
        <dbReference type="ChEBI" id="CHEBI:60240"/>
    </cofactor>
    <text evidence="1 2 3">Binds 1 divalent metal cation per subunit.</text>
</comment>
<comment type="pathway">
    <text evidence="1">Isoprenoid biosynthesis; isopentenyl diphosphate biosynthesis via DXP pathway; isopentenyl diphosphate from 1-deoxy-D-xylulose 5-phosphate: step 4/6.</text>
</comment>
<comment type="subunit">
    <text evidence="1 2 3">Homotrimer.</text>
</comment>
<comment type="similarity">
    <text evidence="1">Belongs to the IspF family.</text>
</comment>
<reference key="1">
    <citation type="journal article" date="2004" name="Proc. Natl. Acad. Sci. U.S.A.">
        <title>Genomic plasticity of the causative agent of melioidosis, Burkholderia pseudomallei.</title>
        <authorList>
            <person name="Holden M.T.G."/>
            <person name="Titball R.W."/>
            <person name="Peacock S.J."/>
            <person name="Cerdeno-Tarraga A.-M."/>
            <person name="Atkins T."/>
            <person name="Crossman L.C."/>
            <person name="Pitt T."/>
            <person name="Churcher C."/>
            <person name="Mungall K.L."/>
            <person name="Bentley S.D."/>
            <person name="Sebaihia M."/>
            <person name="Thomson N.R."/>
            <person name="Bason N."/>
            <person name="Beacham I.R."/>
            <person name="Brooks K."/>
            <person name="Brown K.A."/>
            <person name="Brown N.F."/>
            <person name="Challis G.L."/>
            <person name="Cherevach I."/>
            <person name="Chillingworth T."/>
            <person name="Cronin A."/>
            <person name="Crossett B."/>
            <person name="Davis P."/>
            <person name="DeShazer D."/>
            <person name="Feltwell T."/>
            <person name="Fraser A."/>
            <person name="Hance Z."/>
            <person name="Hauser H."/>
            <person name="Holroyd S."/>
            <person name="Jagels K."/>
            <person name="Keith K.E."/>
            <person name="Maddison M."/>
            <person name="Moule S."/>
            <person name="Price C."/>
            <person name="Quail M.A."/>
            <person name="Rabbinowitsch E."/>
            <person name="Rutherford K."/>
            <person name="Sanders M."/>
            <person name="Simmonds M."/>
            <person name="Songsivilai S."/>
            <person name="Stevens K."/>
            <person name="Tumapa S."/>
            <person name="Vesaratchavest M."/>
            <person name="Whitehead S."/>
            <person name="Yeats C."/>
            <person name="Barrell B.G."/>
            <person name="Oyston P.C.F."/>
            <person name="Parkhill J."/>
        </authorList>
    </citation>
    <scope>NUCLEOTIDE SEQUENCE [LARGE SCALE GENOMIC DNA]</scope>
    <source>
        <strain>K96243</strain>
    </source>
</reference>
<reference key="2">
    <citation type="journal article" date="2011" name="J. Struct. Funct. Genomics">
        <title>Leveraging structure determination with fragment screening for infectious disease drug targets: MECP synthase from Burkholderia pseudomallei.</title>
        <authorList>
            <person name="Begley D.W."/>
            <person name="Hartley R.C."/>
            <person name="Davies D.R."/>
            <person name="Edwards T.E."/>
            <person name="Leonard J.T."/>
            <person name="Abendroth J."/>
            <person name="Burris C.A."/>
            <person name="Bhandari J."/>
            <person name="Myler P.J."/>
            <person name="Staker B.L."/>
            <person name="Stewart L.J."/>
        </authorList>
    </citation>
    <scope>X-RAY CRYSTALLOGRAPHY (2.1 ANGSTROMS) IN COMPLEX WITH SUBSTRATE ANALOGS AND ZINC IONS</scope>
    <scope>COFACTOR</scope>
    <scope>SUBUNIT</scope>
</reference>
<reference key="3">
    <citation type="submission" date="2011-01" db="PDB data bank">
        <title>Crystal structure of 2c-methyl-D-erythritol 2,4-cyclodiphosphate synthase from Burkholderia pseudomallei in complex with cytidine derivative EBSI01028.</title>
        <authorList>
            <consortium name="Seattle structural genomics center for infectious disease (SSGCID)"/>
            <person name="Begley D.W."/>
            <person name="Edwards T.E."/>
            <person name="Staker B.L."/>
            <person name="Hartley R.C."/>
            <person name="Dieterich M."/>
            <person name="Leonard J."/>
            <person name="Burris C."/>
        </authorList>
    </citation>
    <scope>X-RAY CRYSTALLOGRAPHY (1.75 ANGSTROMS) IN COMPLEX WITH SUBSTRATE ANALOGS AND ZINC IONS</scope>
    <scope>COFACTOR</scope>
    <scope>SUBUNIT</scope>
</reference>
<sequence length="162" mass="17175">MDFRIGQGYDVHQLVPGRPLIIGGVTIPYERGLLGHSDADVLLHAITDALFGAAALGDIGRHFSDTDPRFKGADSRALLRECASRVAQAGFAIRNVDSTIIAQAPKLAPHIDAMRANIAADLDLPLDRVNVKAKTNEKLGYLGRGEGIEAQAAALVVREAAA</sequence>
<organism>
    <name type="scientific">Burkholderia pseudomallei (strain K96243)</name>
    <dbReference type="NCBI Taxonomy" id="272560"/>
    <lineage>
        <taxon>Bacteria</taxon>
        <taxon>Pseudomonadati</taxon>
        <taxon>Pseudomonadota</taxon>
        <taxon>Betaproteobacteria</taxon>
        <taxon>Burkholderiales</taxon>
        <taxon>Burkholderiaceae</taxon>
        <taxon>Burkholderia</taxon>
        <taxon>pseudomallei group</taxon>
    </lineage>
</organism>
<keyword id="KW-0002">3D-structure</keyword>
<keyword id="KW-0414">Isoprene biosynthesis</keyword>
<keyword id="KW-0456">Lyase</keyword>
<keyword id="KW-0479">Metal-binding</keyword>
<keyword id="KW-1185">Reference proteome</keyword>
<evidence type="ECO:0000255" key="1">
    <source>
        <dbReference type="HAMAP-Rule" id="MF_00107"/>
    </source>
</evidence>
<evidence type="ECO:0000269" key="2">
    <source>
    </source>
</evidence>
<evidence type="ECO:0000269" key="3">
    <source ref="3"/>
</evidence>
<evidence type="ECO:0007829" key="4">
    <source>
        <dbReference type="PDB" id="3IKE"/>
    </source>
</evidence>
<evidence type="ECO:0007829" key="5">
    <source>
        <dbReference type="PDB" id="3Q8H"/>
    </source>
</evidence>